<sequence>MASLSESEGTNRGSMWELDQNLDQPMDEEASRLKNMYREKKFSSLLLLRLAFQSLGVVFGDLGTSPLYVFYNAFPHGVDDEEDVIGALSLIIYTLTLIPLLKYVFVVLRANDNGQGGTFALYSLLCRHAKISTIPNQHKTDEDLTTYSRQTYEENSVGAKIKRWLEAHAYKRNCLLIVVLIGTCTAIGDGILTPAISVLSASGGIKVQNPNMSTDVVVIVSVIILIGLFSMQHYGTDKVGWLFAPIVLLWFILIGSVGALNIHKYKGSVLKAYNPVYIYRYFQRRNSDSWASLGGIMLSITGTEALFADLCHFPVFAIQIAFTLIVFPCLLLAYTGQAAYIIAHKDHVADAFYRSIPDSIYWPAFVIATAAAIVASQATISATYSIIKQALALGCFPRVKIVHTSKKFLGQIYIPDINWVLLILCIAVTAGFKNQSQIGNAYGTAVVIVMLVTTFLMVPIMLLVWKSHWILVVTFIVLSLMVEIPYFSACLLKIDQGGWVPLVIATAFFIIMYVWHFCTVKRYEFEMHSKVSMAWILGLGPSLGLVRVPGIGFVYTELASGVPHIFSHFITNLPAIHSVVVFVCVKYLPVYTVPMDERFLVRRIGPKNFHIFRCVARYGYKDLHKKDEDFEKMLFNCLLSFLRLESMMEGYSDSDDFSVPEQRTEGSISNAFLAEKTNNNTMCSNGDLSYSSQDSIVPVQSPLRGNSLLRYSSQASHTVSDELEFLNRCKDAGVVHILGNTIVLARRDSGIIKKIAVNYMYAFMRKICRENSVIFNVPHESLLNVGQIYYI</sequence>
<organism>
    <name type="scientific">Oryza sativa subsp. japonica</name>
    <name type="common">Rice</name>
    <dbReference type="NCBI Taxonomy" id="39947"/>
    <lineage>
        <taxon>Eukaryota</taxon>
        <taxon>Viridiplantae</taxon>
        <taxon>Streptophyta</taxon>
        <taxon>Embryophyta</taxon>
        <taxon>Tracheophyta</taxon>
        <taxon>Spermatophyta</taxon>
        <taxon>Magnoliopsida</taxon>
        <taxon>Liliopsida</taxon>
        <taxon>Poales</taxon>
        <taxon>Poaceae</taxon>
        <taxon>BOP clade</taxon>
        <taxon>Oryzoideae</taxon>
        <taxon>Oryzeae</taxon>
        <taxon>Oryzinae</taxon>
        <taxon>Oryza</taxon>
        <taxon>Oryza sativa</taxon>
    </lineage>
</organism>
<comment type="function">
    <text evidence="1">High-affinity potassium transporter.</text>
</comment>
<comment type="subcellular location">
    <subcellularLocation>
        <location evidence="4">Membrane</location>
        <topology evidence="4">Multi-pass membrane protein</topology>
    </subcellularLocation>
</comment>
<comment type="similarity">
    <text evidence="4">Belongs to the HAK/KUP transporter (TC 2.A.72.3) family.</text>
</comment>
<comment type="sequence caution" evidence="4">
    <conflict type="erroneous gene model prediction">
        <sequence resource="EMBL-CDS" id="CAE05216"/>
    </conflict>
</comment>
<dbReference type="EMBL" id="AJ427980">
    <property type="protein sequence ID" value="CAD21001.1"/>
    <property type="molecule type" value="Genomic_DNA"/>
</dbReference>
<dbReference type="EMBL" id="AL731610">
    <property type="protein sequence ID" value="CAE05216.3"/>
    <property type="status" value="ALT_SEQ"/>
    <property type="molecule type" value="Genomic_DNA"/>
</dbReference>
<dbReference type="EMBL" id="AP008210">
    <property type="protein sequence ID" value="BAF15773.1"/>
    <property type="molecule type" value="Genomic_DNA"/>
</dbReference>
<dbReference type="EMBL" id="AP014960">
    <property type="protein sequence ID" value="BAS90983.1"/>
    <property type="molecule type" value="Genomic_DNA"/>
</dbReference>
<dbReference type="EMBL" id="AK072123">
    <property type="status" value="NOT_ANNOTATED_CDS"/>
    <property type="molecule type" value="mRNA"/>
</dbReference>
<dbReference type="RefSeq" id="XP_015635701.1">
    <property type="nucleotide sequence ID" value="XM_015780215.1"/>
</dbReference>
<dbReference type="FunCoup" id="Q7XLC6">
    <property type="interactions" value="180"/>
</dbReference>
<dbReference type="STRING" id="39947.Q7XLC6"/>
<dbReference type="GlyCosmos" id="Q7XLC6">
    <property type="glycosylation" value="2 sites, No reported glycans"/>
</dbReference>
<dbReference type="PaxDb" id="39947-Q7XLC6"/>
<dbReference type="EnsemblPlants" id="Os04t0613900-01">
    <property type="protein sequence ID" value="Os04t0613900-01"/>
    <property type="gene ID" value="Os04g0613900"/>
</dbReference>
<dbReference type="Gramene" id="Os04t0613900-01">
    <property type="protein sequence ID" value="Os04t0613900-01"/>
    <property type="gene ID" value="Os04g0613900"/>
</dbReference>
<dbReference type="KEGG" id="dosa:Os04g0613900"/>
<dbReference type="eggNOG" id="ENOG502QPSA">
    <property type="taxonomic scope" value="Eukaryota"/>
</dbReference>
<dbReference type="HOGENOM" id="CLU_008142_2_0_1"/>
<dbReference type="InParanoid" id="Q7XLC6"/>
<dbReference type="OMA" id="CEAMFAN"/>
<dbReference type="OrthoDB" id="504708at2759"/>
<dbReference type="Proteomes" id="UP000000763">
    <property type="component" value="Chromosome 4"/>
</dbReference>
<dbReference type="Proteomes" id="UP000059680">
    <property type="component" value="Chromosome 4"/>
</dbReference>
<dbReference type="GO" id="GO:0016020">
    <property type="term" value="C:membrane"/>
    <property type="evidence" value="ECO:0000318"/>
    <property type="project" value="GO_Central"/>
</dbReference>
<dbReference type="GO" id="GO:0015079">
    <property type="term" value="F:potassium ion transmembrane transporter activity"/>
    <property type="evidence" value="ECO:0000318"/>
    <property type="project" value="GO_Central"/>
</dbReference>
<dbReference type="GO" id="GO:0006813">
    <property type="term" value="P:potassium ion transport"/>
    <property type="evidence" value="ECO:0000318"/>
    <property type="project" value="GO_Central"/>
</dbReference>
<dbReference type="InterPro" id="IPR003855">
    <property type="entry name" value="K+_transporter"/>
</dbReference>
<dbReference type="InterPro" id="IPR053952">
    <property type="entry name" value="K_trans_C"/>
</dbReference>
<dbReference type="InterPro" id="IPR053951">
    <property type="entry name" value="K_trans_N"/>
</dbReference>
<dbReference type="NCBIfam" id="TIGR00794">
    <property type="entry name" value="kup"/>
    <property type="match status" value="1"/>
</dbReference>
<dbReference type="PANTHER" id="PTHR30540">
    <property type="entry name" value="OSMOTIC STRESS POTASSIUM TRANSPORTER"/>
    <property type="match status" value="1"/>
</dbReference>
<dbReference type="PANTHER" id="PTHR30540:SF95">
    <property type="entry name" value="POTASSIUM TRANSPORTER 10"/>
    <property type="match status" value="1"/>
</dbReference>
<dbReference type="Pfam" id="PF02705">
    <property type="entry name" value="K_trans"/>
    <property type="match status" value="1"/>
</dbReference>
<dbReference type="Pfam" id="PF22776">
    <property type="entry name" value="K_trans_C"/>
    <property type="match status" value="1"/>
</dbReference>
<evidence type="ECO:0000250" key="1"/>
<evidence type="ECO:0000255" key="2"/>
<evidence type="ECO:0000303" key="3">
    <source>
    </source>
</evidence>
<evidence type="ECO:0000305" key="4"/>
<evidence type="ECO:0000312" key="5">
    <source>
        <dbReference type="EMBL" id="BAS90983.1"/>
    </source>
</evidence>
<evidence type="ECO:0000312" key="6">
    <source>
        <dbReference type="EMBL" id="CAE05216.3"/>
    </source>
</evidence>
<proteinExistence type="evidence at transcript level"/>
<name>HAK11_ORYSJ</name>
<gene>
    <name evidence="3" type="primary">HAK11</name>
    <name evidence="5" type="ordered locus">Os04g0613900</name>
    <name evidence="4" type="ordered locus">LOC_Os04g52390</name>
    <name evidence="6" type="ORF">OSJNBa0070C17.23</name>
</gene>
<feature type="chain" id="PRO_0000209098" description="Probable potassium transporter 11">
    <location>
        <begin position="1"/>
        <end position="791"/>
    </location>
</feature>
<feature type="topological domain" description="Cytoplasmic" evidence="2">
    <location>
        <begin position="1"/>
        <end position="49"/>
    </location>
</feature>
<feature type="transmembrane region" description="Helical; Name=1" evidence="2">
    <location>
        <begin position="50"/>
        <end position="70"/>
    </location>
</feature>
<feature type="topological domain" description="Extracellular" evidence="2">
    <location>
        <begin position="71"/>
        <end position="87"/>
    </location>
</feature>
<feature type="transmembrane region" description="Helical; Name=2" evidence="2">
    <location>
        <begin position="88"/>
        <end position="108"/>
    </location>
</feature>
<feature type="topological domain" description="Cytoplasmic" evidence="2">
    <location>
        <begin position="109"/>
        <end position="175"/>
    </location>
</feature>
<feature type="transmembrane region" description="Helical; Name=3" evidence="2">
    <location>
        <begin position="176"/>
        <end position="196"/>
    </location>
</feature>
<feature type="topological domain" description="Extracellular" evidence="2">
    <location>
        <begin position="197"/>
        <end position="215"/>
    </location>
</feature>
<feature type="transmembrane region" description="Helical; Name=4" evidence="2">
    <location>
        <begin position="216"/>
        <end position="236"/>
    </location>
</feature>
<feature type="topological domain" description="Cytoplasmic" evidence="2">
    <location>
        <begin position="237"/>
        <end position="238"/>
    </location>
</feature>
<feature type="transmembrane region" description="Helical; Name=5" evidence="2">
    <location>
        <begin position="239"/>
        <end position="259"/>
    </location>
</feature>
<feature type="topological domain" description="Extracellular" evidence="2">
    <location>
        <begin position="260"/>
        <end position="289"/>
    </location>
</feature>
<feature type="transmembrane region" description="Helical; Name=6" evidence="2">
    <location>
        <begin position="290"/>
        <end position="310"/>
    </location>
</feature>
<feature type="topological domain" description="Cytoplasmic" evidence="2">
    <location>
        <begin position="311"/>
        <end position="315"/>
    </location>
</feature>
<feature type="transmembrane region" description="Helical; Name=7" evidence="2">
    <location>
        <begin position="316"/>
        <end position="338"/>
    </location>
</feature>
<feature type="topological domain" description="Extracellular" evidence="2">
    <location>
        <begin position="339"/>
        <end position="359"/>
    </location>
</feature>
<feature type="transmembrane region" description="Helical; Name=8" evidence="2">
    <location>
        <begin position="360"/>
        <end position="380"/>
    </location>
</feature>
<feature type="topological domain" description="Cytoplasmic" evidence="2">
    <location>
        <begin position="381"/>
        <end position="411"/>
    </location>
</feature>
<feature type="transmembrane region" description="Helical; Name=9" evidence="2">
    <location>
        <begin position="412"/>
        <end position="432"/>
    </location>
</feature>
<feature type="topological domain" description="Extracellular" evidence="2">
    <location>
        <begin position="433"/>
        <end position="444"/>
    </location>
</feature>
<feature type="transmembrane region" description="Helical; Name=10" evidence="2">
    <location>
        <begin position="445"/>
        <end position="465"/>
    </location>
</feature>
<feature type="topological domain" description="Cytoplasmic" evidence="2">
    <location>
        <begin position="466"/>
        <end position="468"/>
    </location>
</feature>
<feature type="transmembrane region" description="Helical; Name=11" evidence="2">
    <location>
        <begin position="469"/>
        <end position="489"/>
    </location>
</feature>
<feature type="topological domain" description="Extracellular" evidence="2">
    <location>
        <begin position="490"/>
        <end position="496"/>
    </location>
</feature>
<feature type="transmembrane region" description="Helical; Name=12" evidence="2">
    <location>
        <begin position="497"/>
        <end position="517"/>
    </location>
</feature>
<feature type="topological domain" description="Cytoplasmic" evidence="2">
    <location>
        <begin position="518"/>
        <end position="791"/>
    </location>
</feature>
<feature type="glycosylation site" description="N-linked (GlcNAc...) asparagine" evidence="2">
    <location>
        <position position="211"/>
    </location>
</feature>
<feature type="glycosylation site" description="N-linked (GlcNAc...) asparagine" evidence="2">
    <location>
        <position position="434"/>
    </location>
</feature>
<feature type="sequence conflict" description="In Ref. 2; CAE05216 and 3; BAF15773." ref="2 3">
    <original>N</original>
    <variation>H</variation>
    <location>
        <position position="685"/>
    </location>
</feature>
<keyword id="KW-0325">Glycoprotein</keyword>
<keyword id="KW-0406">Ion transport</keyword>
<keyword id="KW-0472">Membrane</keyword>
<keyword id="KW-0630">Potassium</keyword>
<keyword id="KW-0633">Potassium transport</keyword>
<keyword id="KW-1185">Reference proteome</keyword>
<keyword id="KW-0812">Transmembrane</keyword>
<keyword id="KW-1133">Transmembrane helix</keyword>
<keyword id="KW-0813">Transport</keyword>
<reference key="1">
    <citation type="journal article" date="2002" name="Plant Physiol.">
        <title>Inventory and functional characterization of the HAK potassium transporters of rice.</title>
        <authorList>
            <person name="Banuelos M.A."/>
            <person name="Garciadeblas B."/>
            <person name="Cubero B."/>
            <person name="Rodriguez-Navarro A."/>
        </authorList>
    </citation>
    <scope>NUCLEOTIDE SEQUENCE [GENOMIC DNA]</scope>
    <scope>NOMENCLATURE</scope>
    <source>
        <strain>cv. Nipponbare</strain>
    </source>
</reference>
<reference key="2">
    <citation type="journal article" date="2002" name="Nature">
        <title>Sequence and analysis of rice chromosome 4.</title>
        <authorList>
            <person name="Feng Q."/>
            <person name="Zhang Y."/>
            <person name="Hao P."/>
            <person name="Wang S."/>
            <person name="Fu G."/>
            <person name="Huang Y."/>
            <person name="Li Y."/>
            <person name="Zhu J."/>
            <person name="Liu Y."/>
            <person name="Hu X."/>
            <person name="Jia P."/>
            <person name="Zhang Y."/>
            <person name="Zhao Q."/>
            <person name="Ying K."/>
            <person name="Yu S."/>
            <person name="Tang Y."/>
            <person name="Weng Q."/>
            <person name="Zhang L."/>
            <person name="Lu Y."/>
            <person name="Mu J."/>
            <person name="Lu Y."/>
            <person name="Zhang L.S."/>
            <person name="Yu Z."/>
            <person name="Fan D."/>
            <person name="Liu X."/>
            <person name="Lu T."/>
            <person name="Li C."/>
            <person name="Wu Y."/>
            <person name="Sun T."/>
            <person name="Lei H."/>
            <person name="Li T."/>
            <person name="Hu H."/>
            <person name="Guan J."/>
            <person name="Wu M."/>
            <person name="Zhang R."/>
            <person name="Zhou B."/>
            <person name="Chen Z."/>
            <person name="Chen L."/>
            <person name="Jin Z."/>
            <person name="Wang R."/>
            <person name="Yin H."/>
            <person name="Cai Z."/>
            <person name="Ren S."/>
            <person name="Lv G."/>
            <person name="Gu W."/>
            <person name="Zhu G."/>
            <person name="Tu Y."/>
            <person name="Jia J."/>
            <person name="Zhang Y."/>
            <person name="Chen J."/>
            <person name="Kang H."/>
            <person name="Chen X."/>
            <person name="Shao C."/>
            <person name="Sun Y."/>
            <person name="Hu Q."/>
            <person name="Zhang X."/>
            <person name="Zhang W."/>
            <person name="Wang L."/>
            <person name="Ding C."/>
            <person name="Sheng H."/>
            <person name="Gu J."/>
            <person name="Chen S."/>
            <person name="Ni L."/>
            <person name="Zhu F."/>
            <person name="Chen W."/>
            <person name="Lan L."/>
            <person name="Lai Y."/>
            <person name="Cheng Z."/>
            <person name="Gu M."/>
            <person name="Jiang J."/>
            <person name="Li J."/>
            <person name="Hong G."/>
            <person name="Xue Y."/>
            <person name="Han B."/>
        </authorList>
    </citation>
    <scope>NUCLEOTIDE SEQUENCE [LARGE SCALE GENOMIC DNA]</scope>
    <source>
        <strain>cv. Nipponbare</strain>
    </source>
</reference>
<reference key="3">
    <citation type="journal article" date="2005" name="Nature">
        <title>The map-based sequence of the rice genome.</title>
        <authorList>
            <consortium name="International rice genome sequencing project (IRGSP)"/>
        </authorList>
    </citation>
    <scope>NUCLEOTIDE SEQUENCE [LARGE SCALE GENOMIC DNA]</scope>
    <source>
        <strain>cv. Nipponbare</strain>
    </source>
</reference>
<reference key="4">
    <citation type="journal article" date="2008" name="Nucleic Acids Res.">
        <title>The rice annotation project database (RAP-DB): 2008 update.</title>
        <authorList>
            <consortium name="The rice annotation project (RAP)"/>
        </authorList>
    </citation>
    <scope>GENOME REANNOTATION</scope>
    <source>
        <strain>cv. Nipponbare</strain>
    </source>
</reference>
<reference key="5">
    <citation type="journal article" date="2013" name="Rice">
        <title>Improvement of the Oryza sativa Nipponbare reference genome using next generation sequence and optical map data.</title>
        <authorList>
            <person name="Kawahara Y."/>
            <person name="de la Bastide M."/>
            <person name="Hamilton J.P."/>
            <person name="Kanamori H."/>
            <person name="McCombie W.R."/>
            <person name="Ouyang S."/>
            <person name="Schwartz D.C."/>
            <person name="Tanaka T."/>
            <person name="Wu J."/>
            <person name="Zhou S."/>
            <person name="Childs K.L."/>
            <person name="Davidson R.M."/>
            <person name="Lin H."/>
            <person name="Quesada-Ocampo L."/>
            <person name="Vaillancourt B."/>
            <person name="Sakai H."/>
            <person name="Lee S.S."/>
            <person name="Kim J."/>
            <person name="Numa H."/>
            <person name="Itoh T."/>
            <person name="Buell C.R."/>
            <person name="Matsumoto T."/>
        </authorList>
    </citation>
    <scope>GENOME REANNOTATION</scope>
    <scope>SEQUENCE REVISION TO 685</scope>
    <source>
        <strain>cv. Nipponbare</strain>
    </source>
</reference>
<reference key="6">
    <citation type="journal article" date="2003" name="Science">
        <title>Collection, mapping, and annotation of over 28,000 cDNA clones from japonica rice.</title>
        <authorList>
            <consortium name="The rice full-length cDNA consortium"/>
        </authorList>
    </citation>
    <scope>NUCLEOTIDE SEQUENCE [LARGE SCALE MRNA]</scope>
    <source>
        <strain>cv. Nipponbare</strain>
    </source>
</reference>
<reference key="7">
    <citation type="journal article" date="2009" name="J. Genet. Genomics">
        <title>Molecular evolution and functional divergence of HAK potassium transporter gene family in rice (Oryza sativa L.).</title>
        <authorList>
            <person name="Yang Z."/>
            <person name="Gao Q."/>
            <person name="Sun C."/>
            <person name="Li W."/>
            <person name="Gu S."/>
            <person name="Xu C."/>
        </authorList>
    </citation>
    <scope>GENE FAMILY</scope>
</reference>
<protein>
    <recommendedName>
        <fullName evidence="3">Probable potassium transporter 11</fullName>
    </recommendedName>
    <alternativeName>
        <fullName evidence="3">OsHAK11</fullName>
    </alternativeName>
</protein>
<accession>Q7XLC6</accession>
<accession>A0A0P0WEP0</accession>
<accession>Q0JA64</accession>
<accession>Q8VXB2</accession>